<comment type="function">
    <text evidence="1">Provides the (R)-glutamate required for cell wall biosynthesis.</text>
</comment>
<comment type="catalytic activity">
    <reaction evidence="1">
        <text>L-glutamate = D-glutamate</text>
        <dbReference type="Rhea" id="RHEA:12813"/>
        <dbReference type="ChEBI" id="CHEBI:29985"/>
        <dbReference type="ChEBI" id="CHEBI:29986"/>
        <dbReference type="EC" id="5.1.1.3"/>
    </reaction>
</comment>
<comment type="pathway">
    <text evidence="1">Cell wall biogenesis; peptidoglycan biosynthesis.</text>
</comment>
<comment type="similarity">
    <text evidence="1">Belongs to the aspartate/glutamate racemases family.</text>
</comment>
<name>MURI_ECOL6</name>
<dbReference type="EC" id="5.1.1.3" evidence="1"/>
<dbReference type="EMBL" id="AE014075">
    <property type="protein sequence ID" value="AAN83358.1"/>
    <property type="molecule type" value="Genomic_DNA"/>
</dbReference>
<dbReference type="RefSeq" id="WP_000201813.1">
    <property type="nucleotide sequence ID" value="NC_004431.1"/>
</dbReference>
<dbReference type="RefSeq" id="WP_001529515.1">
    <property type="nucleotide sequence ID" value="NZ_CP051263.1"/>
</dbReference>
<dbReference type="SMR" id="Q8FB89"/>
<dbReference type="STRING" id="199310.c4930"/>
<dbReference type="KEGG" id="ecc:c4930"/>
<dbReference type="eggNOG" id="COG0796">
    <property type="taxonomic scope" value="Bacteria"/>
</dbReference>
<dbReference type="HOGENOM" id="CLU_052344_2_0_6"/>
<dbReference type="BioCyc" id="ECOL199310:C4930-MONOMER"/>
<dbReference type="UniPathway" id="UPA00219"/>
<dbReference type="Proteomes" id="UP000001410">
    <property type="component" value="Chromosome"/>
</dbReference>
<dbReference type="GO" id="GO:0008881">
    <property type="term" value="F:glutamate racemase activity"/>
    <property type="evidence" value="ECO:0007669"/>
    <property type="project" value="UniProtKB-UniRule"/>
</dbReference>
<dbReference type="GO" id="GO:0071555">
    <property type="term" value="P:cell wall organization"/>
    <property type="evidence" value="ECO:0007669"/>
    <property type="project" value="UniProtKB-KW"/>
</dbReference>
<dbReference type="GO" id="GO:0009252">
    <property type="term" value="P:peptidoglycan biosynthetic process"/>
    <property type="evidence" value="ECO:0007669"/>
    <property type="project" value="UniProtKB-UniRule"/>
</dbReference>
<dbReference type="GO" id="GO:0008360">
    <property type="term" value="P:regulation of cell shape"/>
    <property type="evidence" value="ECO:0007669"/>
    <property type="project" value="UniProtKB-KW"/>
</dbReference>
<dbReference type="FunFam" id="3.40.50.1860:FF:000002">
    <property type="entry name" value="Glutamate racemase"/>
    <property type="match status" value="1"/>
</dbReference>
<dbReference type="Gene3D" id="3.40.50.1860">
    <property type="match status" value="2"/>
</dbReference>
<dbReference type="HAMAP" id="MF_00258">
    <property type="entry name" value="Glu_racemase"/>
    <property type="match status" value="1"/>
</dbReference>
<dbReference type="InterPro" id="IPR015942">
    <property type="entry name" value="Asp/Glu/hydantoin_racemase"/>
</dbReference>
<dbReference type="InterPro" id="IPR001920">
    <property type="entry name" value="Asp/Glu_race"/>
</dbReference>
<dbReference type="InterPro" id="IPR018187">
    <property type="entry name" value="Asp/Glu_racemase_AS_1"/>
</dbReference>
<dbReference type="InterPro" id="IPR033134">
    <property type="entry name" value="Asp/Glu_racemase_AS_2"/>
</dbReference>
<dbReference type="InterPro" id="IPR004391">
    <property type="entry name" value="Glu_race"/>
</dbReference>
<dbReference type="NCBIfam" id="TIGR00067">
    <property type="entry name" value="glut_race"/>
    <property type="match status" value="1"/>
</dbReference>
<dbReference type="NCBIfam" id="NF002034">
    <property type="entry name" value="PRK00865.1-1"/>
    <property type="match status" value="1"/>
</dbReference>
<dbReference type="PANTHER" id="PTHR21198">
    <property type="entry name" value="GLUTAMATE RACEMASE"/>
    <property type="match status" value="1"/>
</dbReference>
<dbReference type="PANTHER" id="PTHR21198:SF2">
    <property type="entry name" value="GLUTAMATE RACEMASE"/>
    <property type="match status" value="1"/>
</dbReference>
<dbReference type="Pfam" id="PF01177">
    <property type="entry name" value="Asp_Glu_race"/>
    <property type="match status" value="1"/>
</dbReference>
<dbReference type="SUPFAM" id="SSF53681">
    <property type="entry name" value="Aspartate/glutamate racemase"/>
    <property type="match status" value="2"/>
</dbReference>
<dbReference type="PROSITE" id="PS00923">
    <property type="entry name" value="ASP_GLU_RACEMASE_1"/>
    <property type="match status" value="1"/>
</dbReference>
<dbReference type="PROSITE" id="PS00924">
    <property type="entry name" value="ASP_GLU_RACEMASE_2"/>
    <property type="match status" value="1"/>
</dbReference>
<reference key="1">
    <citation type="journal article" date="2002" name="Proc. Natl. Acad. Sci. U.S.A.">
        <title>Extensive mosaic structure revealed by the complete genome sequence of uropathogenic Escherichia coli.</title>
        <authorList>
            <person name="Welch R.A."/>
            <person name="Burland V."/>
            <person name="Plunkett G. III"/>
            <person name="Redford P."/>
            <person name="Roesch P."/>
            <person name="Rasko D."/>
            <person name="Buckles E.L."/>
            <person name="Liou S.-R."/>
            <person name="Boutin A."/>
            <person name="Hackett J."/>
            <person name="Stroud D."/>
            <person name="Mayhew G.F."/>
            <person name="Rose D.J."/>
            <person name="Zhou S."/>
            <person name="Schwartz D.C."/>
            <person name="Perna N.T."/>
            <person name="Mobley H.L.T."/>
            <person name="Donnenberg M.S."/>
            <person name="Blattner F.R."/>
        </authorList>
    </citation>
    <scope>NUCLEOTIDE SEQUENCE [LARGE SCALE GENOMIC DNA]</scope>
    <source>
        <strain>CFT073 / ATCC 700928 / UPEC</strain>
    </source>
</reference>
<gene>
    <name evidence="1" type="primary">murI</name>
    <name type="ordered locus">c4930</name>
</gene>
<accession>Q8FB89</accession>
<keyword id="KW-0133">Cell shape</keyword>
<keyword id="KW-0961">Cell wall biogenesis/degradation</keyword>
<keyword id="KW-0413">Isomerase</keyword>
<keyword id="KW-0573">Peptidoglycan synthesis</keyword>
<keyword id="KW-1185">Reference proteome</keyword>
<sequence length="285" mass="31230">MATKLQDGNIPCLAATPSEPRPTVLVFDSGVGGLSVYDEIRHLLPDLHYIYAFDNVAFPYGEKSEVFIVERVVEIVTAVQERYPLALAVVACNTASTVSLPALREKFDFPVVGVVPAIKPAARLTANGIVGLLATRGTVKRSYTHELIARFANECQIEMLGSAEMVELAEAKLHGEDVSLDALKRILRPWLRMKEPPDTVVLGCTHFPLLQEELLQVLPEGTRLVDSGAAIARRTAWLLEHEAPDAKSADANIAFCMAMTPEAEQLLPVLQRYGFETLEKLAVLD</sequence>
<feature type="chain" id="PRO_0000095471" description="Glutamate racemase">
    <location>
        <begin position="1"/>
        <end position="285"/>
    </location>
</feature>
<feature type="active site" description="Proton donor/acceptor" evidence="1">
    <location>
        <position position="92"/>
    </location>
</feature>
<feature type="active site" description="Proton donor/acceptor" evidence="1">
    <location>
        <position position="204"/>
    </location>
</feature>
<feature type="binding site" evidence="1">
    <location>
        <begin position="28"/>
        <end position="29"/>
    </location>
    <ligand>
        <name>substrate</name>
    </ligand>
</feature>
<feature type="binding site" evidence="1">
    <location>
        <begin position="60"/>
        <end position="61"/>
    </location>
    <ligand>
        <name>substrate</name>
    </ligand>
</feature>
<feature type="binding site" evidence="1">
    <location>
        <begin position="93"/>
        <end position="94"/>
    </location>
    <ligand>
        <name>substrate</name>
    </ligand>
</feature>
<feature type="binding site" evidence="1">
    <location>
        <begin position="205"/>
        <end position="206"/>
    </location>
    <ligand>
        <name>substrate</name>
    </ligand>
</feature>
<organism>
    <name type="scientific">Escherichia coli O6:H1 (strain CFT073 / ATCC 700928 / UPEC)</name>
    <dbReference type="NCBI Taxonomy" id="199310"/>
    <lineage>
        <taxon>Bacteria</taxon>
        <taxon>Pseudomonadati</taxon>
        <taxon>Pseudomonadota</taxon>
        <taxon>Gammaproteobacteria</taxon>
        <taxon>Enterobacterales</taxon>
        <taxon>Enterobacteriaceae</taxon>
        <taxon>Escherichia</taxon>
    </lineage>
</organism>
<evidence type="ECO:0000255" key="1">
    <source>
        <dbReference type="HAMAP-Rule" id="MF_00258"/>
    </source>
</evidence>
<proteinExistence type="inferred from homology"/>
<protein>
    <recommendedName>
        <fullName evidence="1">Glutamate racemase</fullName>
        <ecNumber evidence="1">5.1.1.3</ecNumber>
    </recommendedName>
</protein>